<protein>
    <recommendedName>
        <fullName evidence="1">NAD(P)H-quinone oxidoreductase subunit 2</fullName>
        <ecNumber evidence="1">7.1.1.-</ecNumber>
    </recommendedName>
    <alternativeName>
        <fullName evidence="1">NAD(P)H dehydrogenase subunit 2</fullName>
    </alternativeName>
    <alternativeName>
        <fullName evidence="1">NADH-plastoquinone oxidoreductase subunit 2</fullName>
    </alternativeName>
    <alternativeName>
        <fullName evidence="1">NDH-1, subunit 2</fullName>
    </alternativeName>
</protein>
<comment type="function">
    <text evidence="1">NDH-1 shuttles electrons from an unknown electron donor, via FMN and iron-sulfur (Fe-S) centers, to quinones in the respiratory and/or the photosynthetic chain. The immediate electron acceptor for the enzyme in this species is believed to be plastoquinone. Couples the redox reaction to proton translocation, and thus conserves the redox energy in a proton gradient. Cyanobacterial NDH-1 also plays a role in inorganic carbon-concentration.</text>
</comment>
<comment type="catalytic activity">
    <reaction evidence="1">
        <text>a plastoquinone + NADH + (n+1) H(+)(in) = a plastoquinol + NAD(+) + n H(+)(out)</text>
        <dbReference type="Rhea" id="RHEA:42608"/>
        <dbReference type="Rhea" id="RHEA-COMP:9561"/>
        <dbReference type="Rhea" id="RHEA-COMP:9562"/>
        <dbReference type="ChEBI" id="CHEBI:15378"/>
        <dbReference type="ChEBI" id="CHEBI:17757"/>
        <dbReference type="ChEBI" id="CHEBI:57540"/>
        <dbReference type="ChEBI" id="CHEBI:57945"/>
        <dbReference type="ChEBI" id="CHEBI:62192"/>
    </reaction>
</comment>
<comment type="catalytic activity">
    <reaction evidence="1">
        <text>a plastoquinone + NADPH + (n+1) H(+)(in) = a plastoquinol + NADP(+) + n H(+)(out)</text>
        <dbReference type="Rhea" id="RHEA:42612"/>
        <dbReference type="Rhea" id="RHEA-COMP:9561"/>
        <dbReference type="Rhea" id="RHEA-COMP:9562"/>
        <dbReference type="ChEBI" id="CHEBI:15378"/>
        <dbReference type="ChEBI" id="CHEBI:17757"/>
        <dbReference type="ChEBI" id="CHEBI:57783"/>
        <dbReference type="ChEBI" id="CHEBI:58349"/>
        <dbReference type="ChEBI" id="CHEBI:62192"/>
    </reaction>
</comment>
<comment type="subunit">
    <text evidence="1">NDH-1 can be composed of about 15 different subunits; different subcomplexes with different compositions have been identified which probably have different functions.</text>
</comment>
<comment type="subcellular location">
    <subcellularLocation>
        <location evidence="1">Cellular thylakoid membrane</location>
        <topology evidence="1">Multi-pass membrane protein</topology>
    </subcellularLocation>
</comment>
<comment type="similarity">
    <text evidence="1">Belongs to the complex I subunit 2 family.</text>
</comment>
<sequence>MPELGSLLLSTQAVAAPGELLNLALHAGTVGPEAAVLVAMIATLLVDLAGEKVSVRWVPPICYAGLGSALVLLALQWNAPLEPSFLGAFLSDHLAIAFRAVVALSTLLSLLISWRYAEQSGTPVGEYAAILLAATLGGMLLCGATDLVSVFVSLETLSVASYLLSGYMKRDARSSEAALKYLLVGSAAAAVFLYGASLLYGLSGSTSLEVIGNALVTSPTPLAALALVFVLATVAFKIAAVPFHQWTPDVYEGSPTPVVAFLSVGSKAAGFALALRLLVGCFGSFDTQWKLLFTVLAILSMTLGNVVALAQTSMKRMLAYSSIGQAGFVMIGLVCGTEDGFAAMVLYMATYLFMNLGAFACIILFSIRTGSDRISDYAGLYQKDPLITLGLSLCLLSLGGIPPMLGFFGKIYLFFAGWADHQYVLVVVGLVTSVISIYYYIGVIKMMVVKEPQEASEVVKAYPPINWSTMGLPPLRVALVLCVLVTAVGGILSNPLFEWASSTVAGTPLLQQAIATSSGASLG</sequence>
<gene>
    <name evidence="1" type="primary">ndhB</name>
    <name type="ordered locus">sync_2113</name>
</gene>
<reference key="1">
    <citation type="journal article" date="2006" name="Proc. Natl. Acad. Sci. U.S.A.">
        <title>Genome sequence of Synechococcus CC9311: insights into adaptation to a coastal environment.</title>
        <authorList>
            <person name="Palenik B."/>
            <person name="Ren Q."/>
            <person name="Dupont C.L."/>
            <person name="Myers G.S."/>
            <person name="Heidelberg J.F."/>
            <person name="Badger J.H."/>
            <person name="Madupu R."/>
            <person name="Nelson W.C."/>
            <person name="Brinkac L.M."/>
            <person name="Dodson R.J."/>
            <person name="Durkin A.S."/>
            <person name="Daugherty S.C."/>
            <person name="Sullivan S.A."/>
            <person name="Khouri H."/>
            <person name="Mohamoud Y."/>
            <person name="Halpin R."/>
            <person name="Paulsen I.T."/>
        </authorList>
    </citation>
    <scope>NUCLEOTIDE SEQUENCE [LARGE SCALE GENOMIC DNA]</scope>
    <source>
        <strain>CC9311</strain>
    </source>
</reference>
<evidence type="ECO:0000255" key="1">
    <source>
        <dbReference type="HAMAP-Rule" id="MF_00445"/>
    </source>
</evidence>
<proteinExistence type="inferred from homology"/>
<feature type="chain" id="PRO_1000026155" description="NAD(P)H-quinone oxidoreductase subunit 2">
    <location>
        <begin position="1"/>
        <end position="523"/>
    </location>
</feature>
<feature type="transmembrane region" description="Helical" evidence="1">
    <location>
        <begin position="30"/>
        <end position="50"/>
    </location>
</feature>
<feature type="transmembrane region" description="Helical" evidence="1">
    <location>
        <begin position="57"/>
        <end position="77"/>
    </location>
</feature>
<feature type="transmembrane region" description="Helical" evidence="1">
    <location>
        <begin position="94"/>
        <end position="114"/>
    </location>
</feature>
<feature type="transmembrane region" description="Helical" evidence="1">
    <location>
        <begin position="128"/>
        <end position="148"/>
    </location>
</feature>
<feature type="transmembrane region" description="Helical" evidence="1">
    <location>
        <begin position="182"/>
        <end position="202"/>
    </location>
</feature>
<feature type="transmembrane region" description="Helical" evidence="1">
    <location>
        <begin position="223"/>
        <end position="243"/>
    </location>
</feature>
<feature type="transmembrane region" description="Helical" evidence="1">
    <location>
        <begin position="255"/>
        <end position="275"/>
    </location>
</feature>
<feature type="transmembrane region" description="Helical" evidence="1">
    <location>
        <begin position="291"/>
        <end position="311"/>
    </location>
</feature>
<feature type="transmembrane region" description="Helical" evidence="1">
    <location>
        <begin position="317"/>
        <end position="337"/>
    </location>
</feature>
<feature type="transmembrane region" description="Helical" evidence="1">
    <location>
        <begin position="345"/>
        <end position="365"/>
    </location>
</feature>
<feature type="transmembrane region" description="Helical" evidence="1">
    <location>
        <begin position="389"/>
        <end position="409"/>
    </location>
</feature>
<feature type="transmembrane region" description="Helical" evidence="1">
    <location>
        <begin position="424"/>
        <end position="444"/>
    </location>
</feature>
<feature type="transmembrane region" description="Helical" evidence="1">
    <location>
        <begin position="477"/>
        <end position="497"/>
    </location>
</feature>
<name>NU2C_SYNS3</name>
<dbReference type="EC" id="7.1.1.-" evidence="1"/>
<dbReference type="EMBL" id="CP000435">
    <property type="protein sequence ID" value="ABI47557.1"/>
    <property type="molecule type" value="Genomic_DNA"/>
</dbReference>
<dbReference type="RefSeq" id="WP_011620027.1">
    <property type="nucleotide sequence ID" value="NC_008319.1"/>
</dbReference>
<dbReference type="SMR" id="Q0I8A7"/>
<dbReference type="STRING" id="64471.sync_2113"/>
<dbReference type="KEGG" id="syg:sync_2113"/>
<dbReference type="eggNOG" id="COG1007">
    <property type="taxonomic scope" value="Bacteria"/>
</dbReference>
<dbReference type="HOGENOM" id="CLU_007100_1_2_3"/>
<dbReference type="OrthoDB" id="9811718at2"/>
<dbReference type="Proteomes" id="UP000001961">
    <property type="component" value="Chromosome"/>
</dbReference>
<dbReference type="GO" id="GO:0031676">
    <property type="term" value="C:plasma membrane-derived thylakoid membrane"/>
    <property type="evidence" value="ECO:0007669"/>
    <property type="project" value="UniProtKB-SubCell"/>
</dbReference>
<dbReference type="GO" id="GO:0008137">
    <property type="term" value="F:NADH dehydrogenase (ubiquinone) activity"/>
    <property type="evidence" value="ECO:0007669"/>
    <property type="project" value="InterPro"/>
</dbReference>
<dbReference type="GO" id="GO:0048038">
    <property type="term" value="F:quinone binding"/>
    <property type="evidence" value="ECO:0007669"/>
    <property type="project" value="UniProtKB-KW"/>
</dbReference>
<dbReference type="GO" id="GO:0042773">
    <property type="term" value="P:ATP synthesis coupled electron transport"/>
    <property type="evidence" value="ECO:0007669"/>
    <property type="project" value="InterPro"/>
</dbReference>
<dbReference type="GO" id="GO:0019684">
    <property type="term" value="P:photosynthesis, light reaction"/>
    <property type="evidence" value="ECO:0007669"/>
    <property type="project" value="UniProtKB-UniRule"/>
</dbReference>
<dbReference type="HAMAP" id="MF_00445">
    <property type="entry name" value="NDH1_NuoN_1"/>
    <property type="match status" value="1"/>
</dbReference>
<dbReference type="InterPro" id="IPR010096">
    <property type="entry name" value="NADH-Q_OxRdtase_suN/2"/>
</dbReference>
<dbReference type="InterPro" id="IPR001750">
    <property type="entry name" value="ND/Mrp_TM"/>
</dbReference>
<dbReference type="NCBIfam" id="TIGR01770">
    <property type="entry name" value="NDH_I_N"/>
    <property type="match status" value="1"/>
</dbReference>
<dbReference type="NCBIfam" id="NF002701">
    <property type="entry name" value="PRK02504.1"/>
    <property type="match status" value="1"/>
</dbReference>
<dbReference type="PANTHER" id="PTHR22773">
    <property type="entry name" value="NADH DEHYDROGENASE"/>
    <property type="match status" value="1"/>
</dbReference>
<dbReference type="Pfam" id="PF00361">
    <property type="entry name" value="Proton_antipo_M"/>
    <property type="match status" value="1"/>
</dbReference>
<keyword id="KW-0472">Membrane</keyword>
<keyword id="KW-0520">NAD</keyword>
<keyword id="KW-0521">NADP</keyword>
<keyword id="KW-0618">Plastoquinone</keyword>
<keyword id="KW-0874">Quinone</keyword>
<keyword id="KW-1185">Reference proteome</keyword>
<keyword id="KW-0793">Thylakoid</keyword>
<keyword id="KW-1278">Translocase</keyword>
<keyword id="KW-0812">Transmembrane</keyword>
<keyword id="KW-1133">Transmembrane helix</keyword>
<keyword id="KW-0813">Transport</keyword>
<accession>Q0I8A7</accession>
<organism>
    <name type="scientific">Synechococcus sp. (strain CC9311)</name>
    <dbReference type="NCBI Taxonomy" id="64471"/>
    <lineage>
        <taxon>Bacteria</taxon>
        <taxon>Bacillati</taxon>
        <taxon>Cyanobacteriota</taxon>
        <taxon>Cyanophyceae</taxon>
        <taxon>Synechococcales</taxon>
        <taxon>Synechococcaceae</taxon>
        <taxon>Synechococcus</taxon>
    </lineage>
</organism>